<reference key="1">
    <citation type="submission" date="2006-12" db="EMBL/GenBank/DDBJ databases">
        <title>Complete sequence of Shewanella sp. W3-18-1.</title>
        <authorList>
            <consortium name="US DOE Joint Genome Institute"/>
            <person name="Copeland A."/>
            <person name="Lucas S."/>
            <person name="Lapidus A."/>
            <person name="Barry K."/>
            <person name="Detter J.C."/>
            <person name="Glavina del Rio T."/>
            <person name="Hammon N."/>
            <person name="Israni S."/>
            <person name="Dalin E."/>
            <person name="Tice H."/>
            <person name="Pitluck S."/>
            <person name="Chain P."/>
            <person name="Malfatti S."/>
            <person name="Shin M."/>
            <person name="Vergez L."/>
            <person name="Schmutz J."/>
            <person name="Larimer F."/>
            <person name="Land M."/>
            <person name="Hauser L."/>
            <person name="Kyrpides N."/>
            <person name="Lykidis A."/>
            <person name="Tiedje J."/>
            <person name="Richardson P."/>
        </authorList>
    </citation>
    <scope>NUCLEOTIDE SEQUENCE [LARGE SCALE GENOMIC DNA]</scope>
    <source>
        <strain>W3-18-1</strain>
    </source>
</reference>
<feature type="chain" id="PRO_1000026049" description="Thiazole synthase">
    <location>
        <begin position="1"/>
        <end position="254"/>
    </location>
</feature>
<feature type="active site" description="Schiff-base intermediate with DXP" evidence="1">
    <location>
        <position position="95"/>
    </location>
</feature>
<feature type="binding site" evidence="1">
    <location>
        <position position="156"/>
    </location>
    <ligand>
        <name>1-deoxy-D-xylulose 5-phosphate</name>
        <dbReference type="ChEBI" id="CHEBI:57792"/>
    </ligand>
</feature>
<feature type="binding site" evidence="1">
    <location>
        <begin position="182"/>
        <end position="183"/>
    </location>
    <ligand>
        <name>1-deoxy-D-xylulose 5-phosphate</name>
        <dbReference type="ChEBI" id="CHEBI:57792"/>
    </ligand>
</feature>
<feature type="binding site" evidence="1">
    <location>
        <begin position="204"/>
        <end position="205"/>
    </location>
    <ligand>
        <name>1-deoxy-D-xylulose 5-phosphate</name>
        <dbReference type="ChEBI" id="CHEBI:57792"/>
    </ligand>
</feature>
<name>THIG_SHESW</name>
<gene>
    <name evidence="1" type="primary">thiG</name>
    <name type="ordered locus">Sputw3181_2082</name>
</gene>
<keyword id="KW-0963">Cytoplasm</keyword>
<keyword id="KW-0704">Schiff base</keyword>
<keyword id="KW-0784">Thiamine biosynthesis</keyword>
<keyword id="KW-0808">Transferase</keyword>
<evidence type="ECO:0000255" key="1">
    <source>
        <dbReference type="HAMAP-Rule" id="MF_00443"/>
    </source>
</evidence>
<protein>
    <recommendedName>
        <fullName evidence="1">Thiazole synthase</fullName>
        <ecNumber evidence="1">2.8.1.10</ecNumber>
    </recommendedName>
</protein>
<proteinExistence type="inferred from homology"/>
<dbReference type="EC" id="2.8.1.10" evidence="1"/>
<dbReference type="EMBL" id="CP000503">
    <property type="protein sequence ID" value="ABM24910.1"/>
    <property type="molecule type" value="Genomic_DNA"/>
</dbReference>
<dbReference type="RefSeq" id="WP_011789381.1">
    <property type="nucleotide sequence ID" value="NC_008750.1"/>
</dbReference>
<dbReference type="SMR" id="A1RJR5"/>
<dbReference type="KEGG" id="shw:Sputw3181_2082"/>
<dbReference type="HOGENOM" id="CLU_062233_1_0_6"/>
<dbReference type="UniPathway" id="UPA00060"/>
<dbReference type="Proteomes" id="UP000002597">
    <property type="component" value="Chromosome"/>
</dbReference>
<dbReference type="GO" id="GO:0005737">
    <property type="term" value="C:cytoplasm"/>
    <property type="evidence" value="ECO:0007669"/>
    <property type="project" value="UniProtKB-SubCell"/>
</dbReference>
<dbReference type="GO" id="GO:1990107">
    <property type="term" value="F:thiazole synthase activity"/>
    <property type="evidence" value="ECO:0007669"/>
    <property type="project" value="UniProtKB-EC"/>
</dbReference>
<dbReference type="GO" id="GO:0009229">
    <property type="term" value="P:thiamine diphosphate biosynthetic process"/>
    <property type="evidence" value="ECO:0007669"/>
    <property type="project" value="UniProtKB-UniRule"/>
</dbReference>
<dbReference type="CDD" id="cd04728">
    <property type="entry name" value="ThiG"/>
    <property type="match status" value="1"/>
</dbReference>
<dbReference type="FunFam" id="3.20.20.70:FF:000049">
    <property type="entry name" value="Thiazole synthase"/>
    <property type="match status" value="1"/>
</dbReference>
<dbReference type="Gene3D" id="3.20.20.70">
    <property type="entry name" value="Aldolase class I"/>
    <property type="match status" value="1"/>
</dbReference>
<dbReference type="HAMAP" id="MF_00443">
    <property type="entry name" value="ThiG"/>
    <property type="match status" value="1"/>
</dbReference>
<dbReference type="InterPro" id="IPR013785">
    <property type="entry name" value="Aldolase_TIM"/>
</dbReference>
<dbReference type="InterPro" id="IPR033983">
    <property type="entry name" value="Thiazole_synthase_ThiG"/>
</dbReference>
<dbReference type="InterPro" id="IPR008867">
    <property type="entry name" value="ThiG"/>
</dbReference>
<dbReference type="PANTHER" id="PTHR34266">
    <property type="entry name" value="THIAZOLE SYNTHASE"/>
    <property type="match status" value="1"/>
</dbReference>
<dbReference type="PANTHER" id="PTHR34266:SF2">
    <property type="entry name" value="THIAZOLE SYNTHASE"/>
    <property type="match status" value="1"/>
</dbReference>
<dbReference type="Pfam" id="PF05690">
    <property type="entry name" value="ThiG"/>
    <property type="match status" value="1"/>
</dbReference>
<dbReference type="SUPFAM" id="SSF110399">
    <property type="entry name" value="ThiG-like"/>
    <property type="match status" value="1"/>
</dbReference>
<accession>A1RJR5</accession>
<sequence>MLKIADVEFESRLFTGTGKFSNSQVMLEAIRASKSQLVTVAMKRIDFKIGLDDLLTPLRQVGVQLLPNTSGARNAKEAVFAAELAREMLGTRWIKLEIHPDPKYLMPDAIETLEAARILCEKGFIVLPYVHADPVLCRRLEEVGCAAVMPLASPIGSNQGLVTESFLKIIIEQARVPVVIDAGIGAPSQAARAMELGADAVLVNTAIASSASPIVMAECFKEAVQCGRRAFEAGLGRVQTGAVQTSPLTGFLNQ</sequence>
<organism>
    <name type="scientific">Shewanella sp. (strain W3-18-1)</name>
    <dbReference type="NCBI Taxonomy" id="351745"/>
    <lineage>
        <taxon>Bacteria</taxon>
        <taxon>Pseudomonadati</taxon>
        <taxon>Pseudomonadota</taxon>
        <taxon>Gammaproteobacteria</taxon>
        <taxon>Alteromonadales</taxon>
        <taxon>Shewanellaceae</taxon>
        <taxon>Shewanella</taxon>
    </lineage>
</organism>
<comment type="function">
    <text evidence="1">Catalyzes the rearrangement of 1-deoxy-D-xylulose 5-phosphate (DXP) to produce the thiazole phosphate moiety of thiamine. Sulfur is provided by the thiocarboxylate moiety of the carrier protein ThiS. In vitro, sulfur can be provided by H(2)S.</text>
</comment>
<comment type="catalytic activity">
    <reaction evidence="1">
        <text>[ThiS sulfur-carrier protein]-C-terminal-Gly-aminoethanethioate + 2-iminoacetate + 1-deoxy-D-xylulose 5-phosphate = [ThiS sulfur-carrier protein]-C-terminal Gly-Gly + 2-[(2R,5Z)-2-carboxy-4-methylthiazol-5(2H)-ylidene]ethyl phosphate + 2 H2O + H(+)</text>
        <dbReference type="Rhea" id="RHEA:26297"/>
        <dbReference type="Rhea" id="RHEA-COMP:12909"/>
        <dbReference type="Rhea" id="RHEA-COMP:19908"/>
        <dbReference type="ChEBI" id="CHEBI:15377"/>
        <dbReference type="ChEBI" id="CHEBI:15378"/>
        <dbReference type="ChEBI" id="CHEBI:57792"/>
        <dbReference type="ChEBI" id="CHEBI:62899"/>
        <dbReference type="ChEBI" id="CHEBI:77846"/>
        <dbReference type="ChEBI" id="CHEBI:90778"/>
        <dbReference type="ChEBI" id="CHEBI:232372"/>
        <dbReference type="EC" id="2.8.1.10"/>
    </reaction>
</comment>
<comment type="pathway">
    <text evidence="1">Cofactor biosynthesis; thiamine diphosphate biosynthesis.</text>
</comment>
<comment type="subunit">
    <text evidence="1">Homotetramer. Forms heterodimers with either ThiH or ThiS.</text>
</comment>
<comment type="subcellular location">
    <subcellularLocation>
        <location evidence="1">Cytoplasm</location>
    </subcellularLocation>
</comment>
<comment type="similarity">
    <text evidence="1">Belongs to the ThiG family.</text>
</comment>